<gene>
    <name evidence="34 35" type="primary">SLC3A1</name>
    <name type="synonym">NBAT</name>
</gene>
<keyword id="KW-0002">3D-structure</keyword>
<keyword id="KW-0025">Alternative splicing</keyword>
<keyword id="KW-0029">Amino-acid transport</keyword>
<keyword id="KW-1003">Cell membrane</keyword>
<keyword id="KW-0199">Cystinuria</keyword>
<keyword id="KW-0225">Disease variant</keyword>
<keyword id="KW-1015">Disulfide bond</keyword>
<keyword id="KW-0325">Glycoprotein</keyword>
<keyword id="KW-0472">Membrane</keyword>
<keyword id="KW-0597">Phosphoprotein</keyword>
<keyword id="KW-1267">Proteomics identification</keyword>
<keyword id="KW-1185">Reference proteome</keyword>
<keyword id="KW-0735">Signal-anchor</keyword>
<keyword id="KW-0812">Transmembrane</keyword>
<keyword id="KW-1133">Transmembrane helix</keyword>
<keyword id="KW-0813">Transport</keyword>
<proteinExistence type="evidence at protein level"/>
<reference key="1">
    <citation type="journal article" date="1993" name="J. Clin. Invest.">
        <title>Cloning and chromosomal localization of a human kidney cDNA involved in cystine, dibasic, and neutral amino acid transport.</title>
        <authorList>
            <person name="Lee W.-S."/>
            <person name="Wells R.G."/>
            <person name="Sabbag R.V."/>
            <person name="Mohandas T.K."/>
            <person name="Hediger M.A."/>
        </authorList>
    </citation>
    <scope>NUCLEOTIDE SEQUENCE [MRNA] (ISOFORM A)</scope>
    <scope>FUNCTION</scope>
    <scope>TISSUE SPECIFICITY</scope>
    <scope>VARIANT ILE-618</scope>
    <source>
        <tissue>Kidney</tissue>
    </source>
</reference>
<reference key="2">
    <citation type="submission" date="1993-06" db="EMBL/GenBank/DDBJ databases">
        <authorList>
            <person name="Lee W.-S."/>
            <person name="Wells R.G."/>
            <person name="Sabbag R.V."/>
            <person name="Mohandas T.K."/>
            <person name="Hediger M.A."/>
        </authorList>
    </citation>
    <scope>SEQUENCE REVISION TO C-TERMINUS</scope>
</reference>
<reference key="3">
    <citation type="journal article" date="1993" name="J. Biol. Chem.">
        <title>Expression cloning of a human renal cDNA that induces high affinity transport of L-cystine shared with dibasic amino acids in Xenopus oocytes.</title>
        <authorList>
            <person name="Bertran J."/>
            <person name="Werner A."/>
            <person name="Chillaron J."/>
            <person name="Nunes V."/>
            <person name="Biber J."/>
            <person name="Testar X."/>
            <person name="Zorzano A."/>
            <person name="Estivill X."/>
            <person name="Murer H."/>
            <person name="Palacin M."/>
        </authorList>
    </citation>
    <scope>NUCLEOTIDE SEQUENCE [MRNA] (ISOFORM A)</scope>
    <scope>FUNCTION</scope>
    <scope>TISSUE SPECIFICITY</scope>
    <source>
        <tissue>Kidney cortex</tissue>
    </source>
</reference>
<reference key="4">
    <citation type="journal article" date="1996" name="J. Biol. Chem.">
        <title>Effects of truncation of the COOH-terminal region of a Na+-independent neutral and basic amino acid transporter on amino acid transport in Xenopus oocytes.</title>
        <authorList>
            <person name="Miyamoto K."/>
            <person name="Segawa H."/>
            <person name="Tatsumi S."/>
            <person name="Katai K."/>
            <person name="Yamamoto H."/>
            <person name="Taketani Y."/>
            <person name="Haga H."/>
            <person name="Morita K."/>
            <person name="Takeda E."/>
        </authorList>
    </citation>
    <scope>NUCLEOTIDE SEQUENCE [MRNA] (ISOFORM A)</scope>
    <scope>VARIANT ILE-618</scope>
    <scope>FUNCTION</scope>
    <source>
        <tissue>Kidney cortex</tissue>
    </source>
</reference>
<reference key="5">
    <citation type="journal article" date="1997" name="Kidney Int.">
        <title>Genomic organization of a human cystine transporter gene (SLC3A1) and identification of novel mutations causing cystinuria.</title>
        <authorList>
            <person name="Endsley J.K."/>
            <person name="Phillips J.A. III"/>
            <person name="Hruska K.A."/>
            <person name="Denneberg T."/>
            <person name="Carlson J."/>
            <person name="George A.L. Jr."/>
        </authorList>
    </citation>
    <scope>NUCLEOTIDE SEQUENCE [GENOMIC DNA]</scope>
    <scope>VARIANT ILE-618</scope>
    <scope>VARIANTS CSNU TRP-452; HIS-461 AND THR-467</scope>
</reference>
<reference key="6">
    <citation type="journal article" date="2001" name="Kidney Int.">
        <title>Human cystinuria-related transporter: localization and functional characterization.</title>
        <authorList>
            <person name="Mizoguchi K."/>
            <person name="Cha S.H."/>
            <person name="Chairoungdua A."/>
            <person name="Kim J.Y."/>
            <person name="Shigeta Y."/>
            <person name="Matsuo H."/>
            <person name="Fukushima J."/>
            <person name="Awa Y."/>
            <person name="Akakura K."/>
            <person name="Goya T."/>
            <person name="Ito H."/>
            <person name="Endou H."/>
            <person name="Kanai Y."/>
        </authorList>
    </citation>
    <scope>NUCLEOTIDE SEQUENCE [MRNA] (ISOFORM A)</scope>
    <scope>FUNCTION</scope>
    <scope>VARIANT ILE-618</scope>
    <source>
        <tissue>Kidney</tissue>
    </source>
</reference>
<reference key="7">
    <citation type="journal article" date="2005" name="Genomics">
        <title>The 2p21 deletion syndrome: characterization of the transcription content.</title>
        <authorList>
            <person name="Parvari R."/>
            <person name="Gonen Y."/>
            <person name="Alshafee I."/>
            <person name="Buriakovsky S."/>
            <person name="Regev K."/>
            <person name="Hershkovitz E."/>
        </authorList>
    </citation>
    <scope>NUCLEOTIDE SEQUENCE [MRNA] (ISOFORMS B; C; D; E; F AND G)</scope>
    <scope>ALTERNATIVE SPLICING</scope>
    <scope>VARIANT ILE-618</scope>
</reference>
<reference key="8">
    <citation type="journal article" date="2004" name="Nat. Genet.">
        <title>Complete sequencing and characterization of 21,243 full-length human cDNAs.</title>
        <authorList>
            <person name="Ota T."/>
            <person name="Suzuki Y."/>
            <person name="Nishikawa T."/>
            <person name="Otsuki T."/>
            <person name="Sugiyama T."/>
            <person name="Irie R."/>
            <person name="Wakamatsu A."/>
            <person name="Hayashi K."/>
            <person name="Sato H."/>
            <person name="Nagai K."/>
            <person name="Kimura K."/>
            <person name="Makita H."/>
            <person name="Sekine M."/>
            <person name="Obayashi M."/>
            <person name="Nishi T."/>
            <person name="Shibahara T."/>
            <person name="Tanaka T."/>
            <person name="Ishii S."/>
            <person name="Yamamoto J."/>
            <person name="Saito K."/>
            <person name="Kawai Y."/>
            <person name="Isono Y."/>
            <person name="Nakamura Y."/>
            <person name="Nagahari K."/>
            <person name="Murakami K."/>
            <person name="Yasuda T."/>
            <person name="Iwayanagi T."/>
            <person name="Wagatsuma M."/>
            <person name="Shiratori A."/>
            <person name="Sudo H."/>
            <person name="Hosoiri T."/>
            <person name="Kaku Y."/>
            <person name="Kodaira H."/>
            <person name="Kondo H."/>
            <person name="Sugawara M."/>
            <person name="Takahashi M."/>
            <person name="Kanda K."/>
            <person name="Yokoi T."/>
            <person name="Furuya T."/>
            <person name="Kikkawa E."/>
            <person name="Omura Y."/>
            <person name="Abe K."/>
            <person name="Kamihara K."/>
            <person name="Katsuta N."/>
            <person name="Sato K."/>
            <person name="Tanikawa M."/>
            <person name="Yamazaki M."/>
            <person name="Ninomiya K."/>
            <person name="Ishibashi T."/>
            <person name="Yamashita H."/>
            <person name="Murakawa K."/>
            <person name="Fujimori K."/>
            <person name="Tanai H."/>
            <person name="Kimata M."/>
            <person name="Watanabe M."/>
            <person name="Hiraoka S."/>
            <person name="Chiba Y."/>
            <person name="Ishida S."/>
            <person name="Ono Y."/>
            <person name="Takiguchi S."/>
            <person name="Watanabe S."/>
            <person name="Yosida M."/>
            <person name="Hotuta T."/>
            <person name="Kusano J."/>
            <person name="Kanehori K."/>
            <person name="Takahashi-Fujii A."/>
            <person name="Hara H."/>
            <person name="Tanase T.-O."/>
            <person name="Nomura Y."/>
            <person name="Togiya S."/>
            <person name="Komai F."/>
            <person name="Hara R."/>
            <person name="Takeuchi K."/>
            <person name="Arita M."/>
            <person name="Imose N."/>
            <person name="Musashino K."/>
            <person name="Yuuki H."/>
            <person name="Oshima A."/>
            <person name="Sasaki N."/>
            <person name="Aotsuka S."/>
            <person name="Yoshikawa Y."/>
            <person name="Matsunawa H."/>
            <person name="Ichihara T."/>
            <person name="Shiohata N."/>
            <person name="Sano S."/>
            <person name="Moriya S."/>
            <person name="Momiyama H."/>
            <person name="Satoh N."/>
            <person name="Takami S."/>
            <person name="Terashima Y."/>
            <person name="Suzuki O."/>
            <person name="Nakagawa S."/>
            <person name="Senoh A."/>
            <person name="Mizoguchi H."/>
            <person name="Goto Y."/>
            <person name="Shimizu F."/>
            <person name="Wakebe H."/>
            <person name="Hishigaki H."/>
            <person name="Watanabe T."/>
            <person name="Sugiyama A."/>
            <person name="Takemoto M."/>
            <person name="Kawakami B."/>
            <person name="Yamazaki M."/>
            <person name="Watanabe K."/>
            <person name="Kumagai A."/>
            <person name="Itakura S."/>
            <person name="Fukuzumi Y."/>
            <person name="Fujimori Y."/>
            <person name="Komiyama M."/>
            <person name="Tashiro H."/>
            <person name="Tanigami A."/>
            <person name="Fujiwara T."/>
            <person name="Ono T."/>
            <person name="Yamada K."/>
            <person name="Fujii Y."/>
            <person name="Ozaki K."/>
            <person name="Hirao M."/>
            <person name="Ohmori Y."/>
            <person name="Kawabata A."/>
            <person name="Hikiji T."/>
            <person name="Kobatake N."/>
            <person name="Inagaki H."/>
            <person name="Ikema Y."/>
            <person name="Okamoto S."/>
            <person name="Okitani R."/>
            <person name="Kawakami T."/>
            <person name="Noguchi S."/>
            <person name="Itoh T."/>
            <person name="Shigeta K."/>
            <person name="Senba T."/>
            <person name="Matsumura K."/>
            <person name="Nakajima Y."/>
            <person name="Mizuno T."/>
            <person name="Morinaga M."/>
            <person name="Sasaki M."/>
            <person name="Togashi T."/>
            <person name="Oyama M."/>
            <person name="Hata H."/>
            <person name="Watanabe M."/>
            <person name="Komatsu T."/>
            <person name="Mizushima-Sugano J."/>
            <person name="Satoh T."/>
            <person name="Shirai Y."/>
            <person name="Takahashi Y."/>
            <person name="Nakagawa K."/>
            <person name="Okumura K."/>
            <person name="Nagase T."/>
            <person name="Nomura N."/>
            <person name="Kikuchi H."/>
            <person name="Masuho Y."/>
            <person name="Yamashita R."/>
            <person name="Nakai K."/>
            <person name="Yada T."/>
            <person name="Nakamura Y."/>
            <person name="Ohara O."/>
            <person name="Isogai T."/>
            <person name="Sugano S."/>
        </authorList>
    </citation>
    <scope>NUCLEOTIDE SEQUENCE [LARGE SCALE MRNA] (ISOFORM A)</scope>
    <source>
        <tissue>Amygdala</tissue>
    </source>
</reference>
<reference key="9">
    <citation type="submission" date="2005-04" db="EMBL/GenBank/DDBJ databases">
        <authorList>
            <person name="Suzuki Y."/>
            <person name="Sugano S."/>
            <person name="Totoki Y."/>
            <person name="Toyoda A."/>
            <person name="Takeda T."/>
            <person name="Sakaki Y."/>
            <person name="Tanaka A."/>
            <person name="Yokoyama S."/>
        </authorList>
    </citation>
    <scope>NUCLEOTIDE SEQUENCE [LARGE SCALE MRNA] (ISOFORM A)</scope>
    <source>
        <tissue>Kidney</tissue>
    </source>
</reference>
<reference key="10">
    <citation type="journal article" date="2005" name="Nature">
        <title>Generation and annotation of the DNA sequences of human chromosomes 2 and 4.</title>
        <authorList>
            <person name="Hillier L.W."/>
            <person name="Graves T.A."/>
            <person name="Fulton R.S."/>
            <person name="Fulton L.A."/>
            <person name="Pepin K.H."/>
            <person name="Minx P."/>
            <person name="Wagner-McPherson C."/>
            <person name="Layman D."/>
            <person name="Wylie K."/>
            <person name="Sekhon M."/>
            <person name="Becker M.C."/>
            <person name="Fewell G.A."/>
            <person name="Delehaunty K.D."/>
            <person name="Miner T.L."/>
            <person name="Nash W.E."/>
            <person name="Kremitzki C."/>
            <person name="Oddy L."/>
            <person name="Du H."/>
            <person name="Sun H."/>
            <person name="Bradshaw-Cordum H."/>
            <person name="Ali J."/>
            <person name="Carter J."/>
            <person name="Cordes M."/>
            <person name="Harris A."/>
            <person name="Isak A."/>
            <person name="van Brunt A."/>
            <person name="Nguyen C."/>
            <person name="Du F."/>
            <person name="Courtney L."/>
            <person name="Kalicki J."/>
            <person name="Ozersky P."/>
            <person name="Abbott S."/>
            <person name="Armstrong J."/>
            <person name="Belter E.A."/>
            <person name="Caruso L."/>
            <person name="Cedroni M."/>
            <person name="Cotton M."/>
            <person name="Davidson T."/>
            <person name="Desai A."/>
            <person name="Elliott G."/>
            <person name="Erb T."/>
            <person name="Fronick C."/>
            <person name="Gaige T."/>
            <person name="Haakenson W."/>
            <person name="Haglund K."/>
            <person name="Holmes A."/>
            <person name="Harkins R."/>
            <person name="Kim K."/>
            <person name="Kruchowski S.S."/>
            <person name="Strong C.M."/>
            <person name="Grewal N."/>
            <person name="Goyea E."/>
            <person name="Hou S."/>
            <person name="Levy A."/>
            <person name="Martinka S."/>
            <person name="Mead K."/>
            <person name="McLellan M.D."/>
            <person name="Meyer R."/>
            <person name="Randall-Maher J."/>
            <person name="Tomlinson C."/>
            <person name="Dauphin-Kohlberg S."/>
            <person name="Kozlowicz-Reilly A."/>
            <person name="Shah N."/>
            <person name="Swearengen-Shahid S."/>
            <person name="Snider J."/>
            <person name="Strong J.T."/>
            <person name="Thompson J."/>
            <person name="Yoakum M."/>
            <person name="Leonard S."/>
            <person name="Pearman C."/>
            <person name="Trani L."/>
            <person name="Radionenko M."/>
            <person name="Waligorski J.E."/>
            <person name="Wang C."/>
            <person name="Rock S.M."/>
            <person name="Tin-Wollam A.-M."/>
            <person name="Maupin R."/>
            <person name="Latreille P."/>
            <person name="Wendl M.C."/>
            <person name="Yang S.-P."/>
            <person name="Pohl C."/>
            <person name="Wallis J.W."/>
            <person name="Spieth J."/>
            <person name="Bieri T.A."/>
            <person name="Berkowicz N."/>
            <person name="Nelson J.O."/>
            <person name="Osborne J."/>
            <person name="Ding L."/>
            <person name="Meyer R."/>
            <person name="Sabo A."/>
            <person name="Shotland Y."/>
            <person name="Sinha P."/>
            <person name="Wohldmann P.E."/>
            <person name="Cook L.L."/>
            <person name="Hickenbotham M.T."/>
            <person name="Eldred J."/>
            <person name="Williams D."/>
            <person name="Jones T.A."/>
            <person name="She X."/>
            <person name="Ciccarelli F.D."/>
            <person name="Izaurralde E."/>
            <person name="Taylor J."/>
            <person name="Schmutz J."/>
            <person name="Myers R.M."/>
            <person name="Cox D.R."/>
            <person name="Huang X."/>
            <person name="McPherson J.D."/>
            <person name="Mardis E.R."/>
            <person name="Clifton S.W."/>
            <person name="Warren W.C."/>
            <person name="Chinwalla A.T."/>
            <person name="Eddy S.R."/>
            <person name="Marra M.A."/>
            <person name="Ovcharenko I."/>
            <person name="Furey T.S."/>
            <person name="Miller W."/>
            <person name="Eichler E.E."/>
            <person name="Bork P."/>
            <person name="Suyama M."/>
            <person name="Torrents D."/>
            <person name="Waterston R.H."/>
            <person name="Wilson R.K."/>
        </authorList>
    </citation>
    <scope>NUCLEOTIDE SEQUENCE [LARGE SCALE GENOMIC DNA]</scope>
</reference>
<reference key="11">
    <citation type="journal article" date="2004" name="Genome Res.">
        <title>The status, quality, and expansion of the NIH full-length cDNA project: the Mammalian Gene Collection (MGC).</title>
        <authorList>
            <consortium name="The MGC Project Team"/>
        </authorList>
    </citation>
    <scope>NUCLEOTIDE SEQUENCE [LARGE SCALE MRNA] (ISOFORM A)</scope>
    <scope>VARIANT ILE-618</scope>
    <source>
        <tissue>Brain</tissue>
        <tissue>Kidney</tissue>
    </source>
</reference>
<reference key="12">
    <citation type="journal article" date="1996" name="J. Biol. Chem.">
        <title>Obligatory amino acid exchange via systems bo,+-like and y+L-like. A tertiary active transport mechanism for renal reabsorption of cystine and dibasic amino acids.</title>
        <authorList>
            <person name="Chillaron J."/>
            <person name="Estevez R."/>
            <person name="Mora C."/>
            <person name="Wagner C.A."/>
            <person name="Suessbrich H."/>
            <person name="Lang F."/>
            <person name="Gelpi J.L."/>
            <person name="Testar X."/>
            <person name="Busch A.E."/>
            <person name="Zorzano A."/>
            <person name="Palacin M."/>
        </authorList>
    </citation>
    <scope>FUNCTION</scope>
</reference>
<reference key="13">
    <citation type="journal article" date="2006" name="J. Biol. Chem.">
        <title>The structural and functional units of heteromeric amino acid transporters. The heavy subunit rBAT dictates oligomerization of the heteromeric amino acid transporters.</title>
        <authorList>
            <person name="Fernandez E."/>
            <person name="Jimenez-Vidal M."/>
            <person name="Calvo M."/>
            <person name="Zorzano A."/>
            <person name="Tebar F."/>
            <person name="Palacin M."/>
            <person name="Chillaron J."/>
        </authorList>
    </citation>
    <scope>FUNCTION</scope>
    <scope>SUBUNIT</scope>
</reference>
<reference key="14">
    <citation type="journal article" date="1999" name="Mol. Biol. Cell">
        <title>Luminal heterodimeric amino acid transporter defective in cystinuria.</title>
        <authorList>
            <person name="Pfeiffer R."/>
            <person name="Loffing J."/>
            <person name="Rossier G."/>
            <person name="Bauch C."/>
            <person name="Meier C."/>
            <person name="Eggermann T."/>
            <person name="Loffing-Cueni D."/>
            <person name="Kuehn L.C."/>
            <person name="Verrey F."/>
        </authorList>
    </citation>
    <scope>SUBUNIT</scope>
    <scope>FUNCTION</scope>
</reference>
<reference key="15">
    <citation type="journal article" date="1995" name="Proc. Natl. Acad. Sci. U.S.A.">
        <title>Genetic heterogeneity in cystinuria: the SLC3A1 gene is linked to type I but not to type III cystinuria.</title>
        <authorList>
            <person name="Calonge M.J."/>
            <person name="Volpini V."/>
            <person name="Bisceglia L."/>
            <person name="Rousaud F."/>
            <person name="de Sanctis L."/>
            <person name="Beccia E."/>
            <person name="Zelante L."/>
            <person name="Testar X."/>
            <person name="Zorzano A."/>
            <person name="Estivill X."/>
            <person name="Gasparini P."/>
            <person name="Nunes V."/>
            <person name="Palacin M."/>
        </authorList>
    </citation>
    <scope>DISEASE</scope>
</reference>
<reference key="16">
    <citation type="journal article" date="2002" name="Am. J. Physiol.">
        <title>rBAT-b(0,+)AT heterodimer is the main apical reabsorption system for cystine in the kidney.</title>
        <authorList>
            <person name="Fernandez E."/>
            <person name="Carrascal M."/>
            <person name="Rousaud F."/>
            <person name="Abian J."/>
            <person name="Zorzano A."/>
            <person name="Palacin M."/>
            <person name="Chillaron J."/>
        </authorList>
    </citation>
    <scope>SUBUNIT</scope>
    <scope>SUBCELLULAR LOCATION</scope>
    <scope>TISSUE SPECIFICITY</scope>
</reference>
<reference key="17">
    <citation type="journal article" date="2020" name="Proc. Natl. Acad. Sci. U.S.A.">
        <title>Structural basis for amino acid exchange by a human heteromeric amino acid transporter.</title>
        <authorList>
            <person name="Wu D."/>
            <person name="Grund T.N."/>
            <person name="Welsch S."/>
            <person name="Mills D.J."/>
            <person name="Michel M."/>
            <person name="Safarian S."/>
            <person name="Michel H."/>
        </authorList>
    </citation>
    <scope>STRUCTURE BY ELECTRON MICROSCOPY (2.80 ANGSTROMS) IN COMPLEX WITH SLC7A9 AND CALCIUM</scope>
    <scope>DISULFIDE BOND</scope>
    <scope>FUNCTION</scope>
    <scope>SUBUNIT</scope>
    <scope>SUBCELLULAR LOCATION</scope>
</reference>
<reference key="18">
    <citation type="journal article" date="2020" name="Sci. Adv.">
        <title>Cryo-EM structure of the human heteromeric amino acid transporter b0,+AT-rBAT.</title>
        <authorList>
            <person name="Yan R."/>
            <person name="Li Y."/>
            <person name="Shi Y."/>
            <person name="Zhou J."/>
            <person name="Lei J."/>
            <person name="Huang J."/>
            <person name="Zhou Q."/>
        </authorList>
    </citation>
    <scope>STRUCTURE BY ELECTRON MICROSCOPY (2.30 ANGSTROMS) OF 2-685 IN COMPLEX WITH SLC7A9 AND CALCIUM</scope>
    <scope>DISULFIDE BOND</scope>
    <scope>SUBUNIT</scope>
    <scope>FUNCTION</scope>
    <scope>CHARACTERIZATION OF VARIANTS CSNU ALA-183; MET-216; THR-467</scope>
</reference>
<reference key="19">
    <citation type="journal article" date="2006" name="Am. J. Hum. Genet.">
        <title>Deletion of PREPL, a gene encoding a putative serine oligopeptidase, in patients with hypotonia-cystinuria syndrome.</title>
        <authorList>
            <person name="Jaeken J."/>
            <person name="Martens K."/>
            <person name="Francois I."/>
            <person name="Eyskens F."/>
            <person name="Lecointre C."/>
            <person name="Derua R."/>
            <person name="Meulemans S."/>
            <person name="Slootstra J.W."/>
            <person name="Waelkens E."/>
            <person name="de Zegher F."/>
            <person name="Creemers J.W.M."/>
            <person name="Matthijs G."/>
        </authorList>
    </citation>
    <scope>INVOLVEMENT IN HCS</scope>
</reference>
<reference key="20">
    <citation type="journal article" date="2009" name="BMJ Case Rep.">
        <title>Deletion of C2orf34, PREPL and SLC3A1 causes atypical hypotonia-cystinuria syndrome.</title>
        <authorList>
            <person name="Chabrol B."/>
            <person name="Martens K."/>
            <person name="Meulemans S."/>
            <person name="Cano A."/>
            <person name="Jaeken J."/>
            <person name="Matthijs G."/>
            <person name="Creemers J.W."/>
        </authorList>
    </citation>
    <scope>INVOLVEMENT IN HCS</scope>
</reference>
<reference key="21">
    <citation type="journal article" date="1994" name="Nat. Genet.">
        <title>Cystinuria caused by mutations in rBAT, a gene involved in the transport of cystine.</title>
        <authorList>
            <person name="Calonge M.J."/>
            <person name="Gasparini P."/>
            <person name="Chillaron J."/>
            <person name="Chillon M."/>
            <person name="Gallucci M."/>
            <person name="Rousaud F."/>
            <person name="Zelante L."/>
            <person name="Testar X."/>
            <person name="Dallapiccola B."/>
            <person name="Di Silverio F."/>
            <person name="Barcelo P."/>
            <person name="Estivill X."/>
            <person name="Zorzano A."/>
            <person name="Nunes V."/>
            <person name="Palacin M."/>
        </authorList>
    </citation>
    <scope>VARIANTS CSNU GLN-181; LYS-467; THR-467; THR-615; ARG-652 AND PRO-678</scope>
    <scope>CHARACTERIZATION OF VARIANT THR-467</scope>
</reference>
<reference key="22">
    <citation type="journal article" date="1995" name="Am. J. Hum. Genet.">
        <title>Mutations in the SLC3A1 transporter gene in cystinuria.</title>
        <authorList>
            <person name="Pras E."/>
            <person name="Raben N."/>
            <person name="Golomb E."/>
            <person name="Arber N."/>
            <person name="Aksentijevich I."/>
            <person name="Schapiro J.M."/>
            <person name="Harel D."/>
            <person name="Katz G."/>
            <person name="Liberman U."/>
            <person name="Pras M."/>
            <person name="Kastner D.L."/>
        </authorList>
    </citation>
    <scope>VARIANT CSNU GLN-128</scope>
</reference>
<reference key="23">
    <citation type="journal article" date="1995" name="Am. J. Hum. Genet.">
        <title>Molecular genetics of cystinuria: identification of four new mutations and seven polymorphisms, and evidence for genetic heterogeneity.</title>
        <authorList>
            <person name="Gasparini P."/>
            <person name="Calonge M.J."/>
            <person name="Bisceglia L."/>
            <person name="Purroy J."/>
            <person name="Dianzani I."/>
            <person name="Notarangelo A."/>
            <person name="Rousaud F."/>
            <person name="Gallucci M."/>
            <person name="Testar X."/>
            <person name="Ponzone A."/>
            <person name="Estivill X."/>
            <person name="Zorzano A."/>
            <person name="Palacin M."/>
            <person name="Nunes V."/>
            <person name="Zelante L."/>
        </authorList>
    </citation>
    <scope>VARIANTS CSNU TRP-365; HIS-582 AND SER-648</scope>
    <scope>VARIANT ILE-618</scope>
</reference>
<reference key="24">
    <citation type="journal article" date="1995" name="Biochem. J.">
        <title>Mutations of the basic amino acid transporter gene associated with cystinuria.</title>
        <authorList>
            <person name="Miyamoto K."/>
            <person name="Katai K."/>
            <person name="Tatsumi S."/>
            <person name="Sone K."/>
            <person name="Segawa H."/>
            <person name="Yamamoto H."/>
            <person name="Taketani Y."/>
            <person name="Takada K."/>
            <person name="Morita K."/>
            <person name="Kanayama H."/>
            <person name="Kagawa S."/>
            <person name="Takeda E."/>
        </authorList>
    </citation>
    <scope>VARIANTS CSNU LYS-268 AND ALA-341</scope>
    <scope>CHARACTERIZATION OF VARIANTS CSNU LYS-268 AND ALA-341</scope>
</reference>
<reference key="25">
    <citation type="journal article" date="2000" name="Hum. Mutat.">
        <title>Identification of two novel mutations [P122S (364C&gt;T) and 1601delAC] in the SLC3A1 gene in type I cystinurics.</title>
        <authorList>
            <person name="Gitomer W.L."/>
            <person name="Reed B.Y."/>
            <person name="Pak C.Y.C."/>
        </authorList>
    </citation>
    <scope>VARIANT CSNU SER-122</scope>
</reference>
<reference key="26">
    <citation type="journal article" date="2001" name="Hum. Mutat.">
        <title>Identification of 12 novel mutations in the SLC3A1 gene in Swedish cystinuria patients.</title>
        <authorList>
            <person name="Harnevik L."/>
            <person name="Fjellstedt E."/>
            <person name="Molbaek A."/>
            <person name="Tiselius H.-G."/>
            <person name="Denneberg T."/>
            <person name="Soederkvist P."/>
        </authorList>
    </citation>
    <scope>VARIANTS CSNU CYS-151; LYS-253; HIS-362; ARG-398; HIS-461; THR-467; VAL-481; LYS-482; ARG-510; THR-584; SER-599 AND GLU-600</scope>
    <scope>VARIANT ILE-618</scope>
</reference>
<reference key="27">
    <citation type="journal article" date="2002" name="Kidney Int.">
        <title>Cystinuria in children: distribution and frequencies of mutations in the SLC3A1 and SLC7A9 genes.</title>
        <authorList>
            <person name="Botzenhart E."/>
            <person name="Vester U."/>
            <person name="Schmidt C."/>
            <person name="Hesse A."/>
            <person name="Halber M."/>
            <person name="Wagner C."/>
            <person name="Lang F."/>
            <person name="Hoyer P."/>
            <person name="Zerres K."/>
            <person name="Eggermann T."/>
        </authorList>
    </citation>
    <scope>VARIANTS CSNU MET-216; CYS-362; TRP-365; THR-467 AND ALA-508</scope>
</reference>
<reference key="28">
    <citation type="journal article" date="2005" name="Ann. Hum. Genet.">
        <title>Molecular genetic analysis of SLC3A1 and SLC7A9 genes in Czech and Slovak cystinuric patients.</title>
        <authorList>
            <person name="Skopkova Z."/>
            <person name="Hrabincova E."/>
            <person name="Stastna S."/>
            <person name="Kozak L."/>
            <person name="Adam T."/>
        </authorList>
    </citation>
    <scope>VARIANTS CSNU ARG-140; TYR-179; MET-216; PRO-365; TRP-452; THR-467 AND TRP-547</scope>
</reference>
<reference key="29">
    <citation type="journal article" date="2005" name="J. Med. Genet.">
        <title>New insights into cystinuria: 40 new mutations, genotype-phenotype correlation, and digenic inheritance causing partial phenotype.</title>
        <authorList>
            <person name="Font-Llitjos M."/>
            <person name="Jimenez-Vidal M."/>
            <person name="Bisceglia L."/>
            <person name="Di Perna M."/>
            <person name="de Sanctis L."/>
            <person name="Rousaud F."/>
            <person name="Zelante L."/>
            <person name="Palacin M."/>
            <person name="Nunes V."/>
        </authorList>
    </citation>
    <scope>VARIANTS CSNU PRO-89; ARG-123; CYS-124; PRO-130; GLY-137; GLN-149; MET-189; PRO-348; LYS-410; ARG-441; LEU-455; CYS-456; HIS-456; LEU-507; SER-568 AND TRP-666</scope>
</reference>
<reference key="30">
    <citation type="journal article" date="2006" name="Kidney Int.">
        <title>A novel missense mutation of SLC7A9 frequent in Japanese cystinuria cases affecting the C-terminus of the transporter.</title>
        <authorList>
            <person name="Shigeta Y."/>
            <person name="Kanai Y."/>
            <person name="Chairoungdua A."/>
            <person name="Ahmed N."/>
            <person name="Sakamoto S."/>
            <person name="Matsuo H."/>
            <person name="Kim D.K."/>
            <person name="Fujimura M."/>
            <person name="Anzai N."/>
            <person name="Mizoguchi K."/>
            <person name="Ueda T."/>
            <person name="Akakura K."/>
            <person name="Ichikawa T."/>
            <person name="Ito H."/>
            <person name="Endou H."/>
        </authorList>
    </citation>
    <scope>VARIANTS CSNU ALA-183; PRO-346; THR-445 AND ARG-673</scope>
    <scope>FUNCTION</scope>
</reference>
<reference key="31">
    <citation type="journal article" date="2010" name="Mol. Genet. Metab.">
        <title>Large rearrangements detected by MLPA, point mutations, and survey of the frequency of mutations within the SLC3A1 and SLC7A9 genes in a cohort of 172 cystinuric Italian patients.</title>
        <authorList>
            <person name="Bisceglia L."/>
            <person name="Fischetti L."/>
            <person name="Bonis P.D."/>
            <person name="Palumbo O."/>
            <person name="Augello B."/>
            <person name="Stanziale P."/>
            <person name="Carella M."/>
            <person name="Zelante L."/>
        </authorList>
    </citation>
    <scope>VARIANTS CSNU GLY-137; TRP-365; GLN-452; THR-467 AND TRP-547</scope>
</reference>
<evidence type="ECO:0000250" key="1">
    <source>
        <dbReference type="UniProtKB" id="Q64319"/>
    </source>
</evidence>
<evidence type="ECO:0000250" key="2">
    <source>
        <dbReference type="UniProtKB" id="Q91WV7"/>
    </source>
</evidence>
<evidence type="ECO:0000255" key="3"/>
<evidence type="ECO:0000256" key="4">
    <source>
        <dbReference type="SAM" id="MobiDB-lite"/>
    </source>
</evidence>
<evidence type="ECO:0000269" key="5">
    <source>
    </source>
</evidence>
<evidence type="ECO:0000269" key="6">
    <source>
    </source>
</evidence>
<evidence type="ECO:0000269" key="7">
    <source>
    </source>
</evidence>
<evidence type="ECO:0000269" key="8">
    <source>
    </source>
</evidence>
<evidence type="ECO:0000269" key="9">
    <source>
    </source>
</evidence>
<evidence type="ECO:0000269" key="10">
    <source>
    </source>
</evidence>
<evidence type="ECO:0000269" key="11">
    <source>
    </source>
</evidence>
<evidence type="ECO:0000269" key="12">
    <source>
    </source>
</evidence>
<evidence type="ECO:0000269" key="13">
    <source>
    </source>
</evidence>
<evidence type="ECO:0000269" key="14">
    <source>
    </source>
</evidence>
<evidence type="ECO:0000269" key="15">
    <source>
    </source>
</evidence>
<evidence type="ECO:0000269" key="16">
    <source>
    </source>
</evidence>
<evidence type="ECO:0000269" key="17">
    <source>
    </source>
</evidence>
<evidence type="ECO:0000269" key="18">
    <source>
    </source>
</evidence>
<evidence type="ECO:0000269" key="19">
    <source>
    </source>
</evidence>
<evidence type="ECO:0000269" key="20">
    <source>
    </source>
</evidence>
<evidence type="ECO:0000269" key="21">
    <source>
    </source>
</evidence>
<evidence type="ECO:0000269" key="22">
    <source>
    </source>
</evidence>
<evidence type="ECO:0000269" key="23">
    <source>
    </source>
</evidence>
<evidence type="ECO:0000269" key="24">
    <source>
    </source>
</evidence>
<evidence type="ECO:0000269" key="25">
    <source>
    </source>
</evidence>
<evidence type="ECO:0000269" key="26">
    <source>
    </source>
</evidence>
<evidence type="ECO:0000269" key="27">
    <source>
    </source>
</evidence>
<evidence type="ECO:0000269" key="28">
    <source>
    </source>
</evidence>
<evidence type="ECO:0000269" key="29">
    <source>
    </source>
</evidence>
<evidence type="ECO:0000269" key="30">
    <source>
    </source>
</evidence>
<evidence type="ECO:0000303" key="31">
    <source>
    </source>
</evidence>
<evidence type="ECO:0000303" key="32">
    <source>
    </source>
</evidence>
<evidence type="ECO:0000303" key="33">
    <source>
    </source>
</evidence>
<evidence type="ECO:0000303" key="34">
    <source>
    </source>
</evidence>
<evidence type="ECO:0000312" key="35">
    <source>
        <dbReference type="HGNC" id="HGNC:11025"/>
    </source>
</evidence>
<evidence type="ECO:0007744" key="36">
    <source>
        <dbReference type="PDB" id="6LI9"/>
    </source>
</evidence>
<evidence type="ECO:0007744" key="37">
    <source>
        <dbReference type="PDB" id="6LID"/>
    </source>
</evidence>
<evidence type="ECO:0007744" key="38">
    <source>
        <dbReference type="PDB" id="6YUP"/>
    </source>
</evidence>
<evidence type="ECO:0007744" key="39">
    <source>
        <dbReference type="PDB" id="6YUZ"/>
    </source>
</evidence>
<evidence type="ECO:0007829" key="40">
    <source>
        <dbReference type="PDB" id="6LI9"/>
    </source>
</evidence>
<evidence type="ECO:0007829" key="41">
    <source>
        <dbReference type="PDB" id="6LID"/>
    </source>
</evidence>
<evidence type="ECO:0007829" key="42">
    <source>
        <dbReference type="PDB" id="6YUZ"/>
    </source>
</evidence>
<protein>
    <recommendedName>
        <fullName>Amino acid transporter heavy chain SLC3A1</fullName>
    </recommendedName>
    <alternativeName>
        <fullName evidence="32">D2h</fullName>
    </alternativeName>
    <alternativeName>
        <fullName evidence="33">Neutral and basic amino acid transport protein</fullName>
        <shortName evidence="33">NBAT</shortName>
    </alternativeName>
    <alternativeName>
        <fullName>Solute carrier family 3 member 1</fullName>
    </alternativeName>
    <alternativeName>
        <fullName>b(0,+)-type amino acid transporter-related heavy chain</fullName>
        <shortName evidence="32">rBAT</shortName>
    </alternativeName>
</protein>
<dbReference type="EMBL" id="M95548">
    <property type="protein sequence ID" value="AAA35500.1"/>
    <property type="molecule type" value="mRNA"/>
</dbReference>
<dbReference type="EMBL" id="L11696">
    <property type="protein sequence ID" value="AAA81778.1"/>
    <property type="molecule type" value="mRNA"/>
</dbReference>
<dbReference type="EMBL" id="D82326">
    <property type="protein sequence ID" value="BAA11541.1"/>
    <property type="molecule type" value="mRNA"/>
</dbReference>
<dbReference type="EMBL" id="U60819">
    <property type="protein sequence ID" value="AAB39829.1"/>
    <property type="molecule type" value="Genomic_DNA"/>
</dbReference>
<dbReference type="EMBL" id="U60810">
    <property type="protein sequence ID" value="AAB39829.1"/>
    <property type="status" value="JOINED"/>
    <property type="molecule type" value="Genomic_DNA"/>
</dbReference>
<dbReference type="EMBL" id="U60811">
    <property type="protein sequence ID" value="AAB39829.1"/>
    <property type="status" value="JOINED"/>
    <property type="molecule type" value="Genomic_DNA"/>
</dbReference>
<dbReference type="EMBL" id="U60812">
    <property type="protein sequence ID" value="AAB39829.1"/>
    <property type="status" value="JOINED"/>
    <property type="molecule type" value="Genomic_DNA"/>
</dbReference>
<dbReference type="EMBL" id="U60813">
    <property type="protein sequence ID" value="AAB39829.1"/>
    <property type="status" value="JOINED"/>
    <property type="molecule type" value="Genomic_DNA"/>
</dbReference>
<dbReference type="EMBL" id="U60816">
    <property type="protein sequence ID" value="AAB39829.1"/>
    <property type="status" value="JOINED"/>
    <property type="molecule type" value="Genomic_DNA"/>
</dbReference>
<dbReference type="EMBL" id="U60818">
    <property type="protein sequence ID" value="AAB39829.1"/>
    <property type="status" value="JOINED"/>
    <property type="molecule type" value="Genomic_DNA"/>
</dbReference>
<dbReference type="EMBL" id="U60814">
    <property type="protein sequence ID" value="AAB39829.1"/>
    <property type="status" value="JOINED"/>
    <property type="molecule type" value="Genomic_DNA"/>
</dbReference>
<dbReference type="EMBL" id="U60815">
    <property type="protein sequence ID" value="AAB39829.1"/>
    <property type="status" value="JOINED"/>
    <property type="molecule type" value="Genomic_DNA"/>
</dbReference>
<dbReference type="EMBL" id="AB033549">
    <property type="protein sequence ID" value="BAB16841.1"/>
    <property type="molecule type" value="mRNA"/>
</dbReference>
<dbReference type="EMBL" id="DQ023512">
    <property type="protein sequence ID" value="AAY89643.1"/>
    <property type="molecule type" value="mRNA"/>
</dbReference>
<dbReference type="EMBL" id="DQ023513">
    <property type="protein sequence ID" value="AAY89644.1"/>
    <property type="molecule type" value="mRNA"/>
</dbReference>
<dbReference type="EMBL" id="DQ023514">
    <property type="protein sequence ID" value="AAY89645.1"/>
    <property type="molecule type" value="mRNA"/>
</dbReference>
<dbReference type="EMBL" id="DQ023515">
    <property type="protein sequence ID" value="AAY89646.1"/>
    <property type="molecule type" value="mRNA"/>
</dbReference>
<dbReference type="EMBL" id="DQ023516">
    <property type="protein sequence ID" value="AAY89647.1"/>
    <property type="molecule type" value="mRNA"/>
</dbReference>
<dbReference type="EMBL" id="DQ023517">
    <property type="protein sequence ID" value="AAY89648.1"/>
    <property type="molecule type" value="mRNA"/>
</dbReference>
<dbReference type="EMBL" id="AK223146">
    <property type="protein sequence ID" value="BAD96866.1"/>
    <property type="molecule type" value="mRNA"/>
</dbReference>
<dbReference type="EMBL" id="AK289636">
    <property type="protein sequence ID" value="BAF82325.1"/>
    <property type="molecule type" value="mRNA"/>
</dbReference>
<dbReference type="EMBL" id="AC013717">
    <property type="protein sequence ID" value="AAX88955.1"/>
    <property type="molecule type" value="Genomic_DNA"/>
</dbReference>
<dbReference type="EMBL" id="BC022386">
    <property type="protein sequence ID" value="AAH22386.1"/>
    <property type="molecule type" value="mRNA"/>
</dbReference>
<dbReference type="EMBL" id="BC093624">
    <property type="protein sequence ID" value="AAH93624.1"/>
    <property type="molecule type" value="mRNA"/>
</dbReference>
<dbReference type="EMBL" id="BC093626">
    <property type="protein sequence ID" value="AAH93626.1"/>
    <property type="molecule type" value="mRNA"/>
</dbReference>
<dbReference type="CCDS" id="CCDS1819.1">
    <molecule id="Q07837-1"/>
</dbReference>
<dbReference type="PIR" id="A47102">
    <property type="entry name" value="A47102"/>
</dbReference>
<dbReference type="RefSeq" id="NP_000332.2">
    <molecule id="Q07837-1"/>
    <property type="nucleotide sequence ID" value="NM_000341.4"/>
</dbReference>
<dbReference type="PDB" id="6LI9">
    <property type="method" value="EM"/>
    <property type="resolution" value="2.30 A"/>
    <property type="chains" value="A/C=2-685"/>
</dbReference>
<dbReference type="PDB" id="6LID">
    <property type="method" value="EM"/>
    <property type="resolution" value="2.70 A"/>
    <property type="chains" value="A/C=2-685"/>
</dbReference>
<dbReference type="PDB" id="6YUP">
    <property type="method" value="EM"/>
    <property type="resolution" value="2.90 A"/>
    <property type="chains" value="A/C=1-685"/>
</dbReference>
<dbReference type="PDB" id="6YUZ">
    <property type="method" value="EM"/>
    <property type="resolution" value="2.80 A"/>
    <property type="chains" value="A/C=1-685"/>
</dbReference>
<dbReference type="PDBsum" id="6LI9"/>
<dbReference type="PDBsum" id="6LID"/>
<dbReference type="PDBsum" id="6YUP"/>
<dbReference type="PDBsum" id="6YUZ"/>
<dbReference type="EMDB" id="EMD-0903"/>
<dbReference type="EMDB" id="EMD-0904"/>
<dbReference type="EMDB" id="EMD-10933"/>
<dbReference type="EMDB" id="EMD-10936"/>
<dbReference type="SMR" id="Q07837"/>
<dbReference type="BioGRID" id="112410">
    <property type="interactions" value="3"/>
</dbReference>
<dbReference type="ComplexPortal" id="CPX-8184">
    <property type="entry name" value="B(0,+)AT1-rBAT heteromeric amino acid transporter complex"/>
</dbReference>
<dbReference type="FunCoup" id="Q07837">
    <property type="interactions" value="128"/>
</dbReference>
<dbReference type="IntAct" id="Q07837">
    <property type="interactions" value="1"/>
</dbReference>
<dbReference type="STRING" id="9606.ENSP00000260649"/>
<dbReference type="DrugBank" id="DB00138">
    <property type="generic name" value="Cystine"/>
</dbReference>
<dbReference type="CAZy" id="GH13">
    <property type="family name" value="Glycoside Hydrolase Family 13"/>
</dbReference>
<dbReference type="TCDB" id="8.A.9.1.2">
    <property type="family name" value="the rbat transport accessory protein (rbat) family"/>
</dbReference>
<dbReference type="GlyCosmos" id="Q07837">
    <property type="glycosylation" value="6 sites, No reported glycans"/>
</dbReference>
<dbReference type="GlyGen" id="Q07837">
    <property type="glycosylation" value="8 sites, 35 N-linked glycans (2 sites), 1 O-linked glycan (1 site)"/>
</dbReference>
<dbReference type="iPTMnet" id="Q07837"/>
<dbReference type="PhosphoSitePlus" id="Q07837"/>
<dbReference type="BioMuta" id="SLC3A1"/>
<dbReference type="DMDM" id="67472674"/>
<dbReference type="jPOST" id="Q07837"/>
<dbReference type="MassIVE" id="Q07837"/>
<dbReference type="PaxDb" id="9606-ENSP00000260649"/>
<dbReference type="PeptideAtlas" id="Q07837"/>
<dbReference type="ProteomicsDB" id="58542">
    <molecule id="Q07837-1"/>
</dbReference>
<dbReference type="ProteomicsDB" id="62166"/>
<dbReference type="ProteomicsDB" id="62167"/>
<dbReference type="ProteomicsDB" id="62168"/>
<dbReference type="ProteomicsDB" id="62169"/>
<dbReference type="Antibodypedia" id="29895">
    <property type="antibodies" value="235 antibodies from 29 providers"/>
</dbReference>
<dbReference type="DNASU" id="6519"/>
<dbReference type="Ensembl" id="ENST00000260649.11">
    <molecule id="Q07837-1"/>
    <property type="protein sequence ID" value="ENSP00000260649.6"/>
    <property type="gene ID" value="ENSG00000138079.14"/>
</dbReference>
<dbReference type="Ensembl" id="ENST00000409229.7">
    <molecule id="Q07837-6"/>
    <property type="protein sequence ID" value="ENSP00000386620.3"/>
    <property type="gene ID" value="ENSG00000138079.14"/>
</dbReference>
<dbReference type="Ensembl" id="ENST00000409380.5">
    <molecule id="Q07837-2"/>
    <property type="protein sequence ID" value="ENSP00000386709.1"/>
    <property type="gene ID" value="ENSG00000138079.14"/>
</dbReference>
<dbReference type="Ensembl" id="ENST00000409740.3">
    <molecule id="Q07837-4"/>
    <property type="protein sequence ID" value="ENSP00000386677.3"/>
    <property type="gene ID" value="ENSG00000138079.14"/>
</dbReference>
<dbReference type="Ensembl" id="ENST00000409741.5">
    <molecule id="Q07837-5"/>
    <property type="protein sequence ID" value="ENSP00000386954.1"/>
    <property type="gene ID" value="ENSG00000138079.14"/>
</dbReference>
<dbReference type="Ensembl" id="ENST00000410056.7">
    <molecule id="Q07837-3"/>
    <property type="protein sequence ID" value="ENSP00000387337.3"/>
    <property type="gene ID" value="ENSG00000138079.14"/>
</dbReference>
<dbReference type="GeneID" id="6519"/>
<dbReference type="KEGG" id="hsa:6519"/>
<dbReference type="MANE-Select" id="ENST00000260649.11">
    <property type="protein sequence ID" value="ENSP00000260649.6"/>
    <property type="RefSeq nucleotide sequence ID" value="NM_000341.4"/>
    <property type="RefSeq protein sequence ID" value="NP_000332.2"/>
</dbReference>
<dbReference type="UCSC" id="uc002rty.4">
    <molecule id="Q07837-1"/>
    <property type="organism name" value="human"/>
</dbReference>
<dbReference type="AGR" id="HGNC:11025"/>
<dbReference type="CTD" id="6519"/>
<dbReference type="DisGeNET" id="6519"/>
<dbReference type="GeneCards" id="SLC3A1"/>
<dbReference type="HGNC" id="HGNC:11025">
    <property type="gene designation" value="SLC3A1"/>
</dbReference>
<dbReference type="HPA" id="ENSG00000138079">
    <property type="expression patterns" value="Tissue enhanced (intestine, kidney, pancreas)"/>
</dbReference>
<dbReference type="MalaCards" id="SLC3A1"/>
<dbReference type="MIM" id="104614">
    <property type="type" value="gene"/>
</dbReference>
<dbReference type="MIM" id="220100">
    <property type="type" value="phenotype"/>
</dbReference>
<dbReference type="MIM" id="606407">
    <property type="type" value="phenotype"/>
</dbReference>
<dbReference type="neXtProt" id="NX_Q07837"/>
<dbReference type="OpenTargets" id="ENSG00000138079"/>
<dbReference type="Orphanet" id="163693">
    <property type="disease" value="2p21 microdeletion syndrome"/>
</dbReference>
<dbReference type="Orphanet" id="238523">
    <property type="disease" value="Atypical hypotonia-cystinuria syndrome"/>
</dbReference>
<dbReference type="Orphanet" id="93612">
    <property type="disease" value="Cystinuria type A"/>
</dbReference>
<dbReference type="Orphanet" id="163690">
    <property type="disease" value="Hypotonia-cystinuria syndrome"/>
</dbReference>
<dbReference type="PharmGKB" id="PA35893"/>
<dbReference type="VEuPathDB" id="HostDB:ENSG00000138079"/>
<dbReference type="eggNOG" id="KOG0471">
    <property type="taxonomic scope" value="Eukaryota"/>
</dbReference>
<dbReference type="GeneTree" id="ENSGT00940000158103"/>
<dbReference type="HOGENOM" id="CLU_006462_8_0_1"/>
<dbReference type="InParanoid" id="Q07837"/>
<dbReference type="OMA" id="PNGEKWA"/>
<dbReference type="OrthoDB" id="1740265at2759"/>
<dbReference type="PAN-GO" id="Q07837">
    <property type="GO annotations" value="1 GO annotation based on evolutionary models"/>
</dbReference>
<dbReference type="PhylomeDB" id="Q07837"/>
<dbReference type="TreeFam" id="TF314498"/>
<dbReference type="PathwayCommons" id="Q07837"/>
<dbReference type="Reactome" id="R-HSA-352230">
    <property type="pathway name" value="Amino acid transport across the plasma membrane"/>
</dbReference>
<dbReference type="Reactome" id="R-HSA-5619113">
    <property type="pathway name" value="Defective SLC3A1 causes cystinuria (CSNU)"/>
</dbReference>
<dbReference type="Reactome" id="R-HSA-5660883">
    <property type="pathway name" value="Defective SLC7A9 causes cystinuria (CSNU)"/>
</dbReference>
<dbReference type="SignaLink" id="Q07837"/>
<dbReference type="SIGNOR" id="Q07837"/>
<dbReference type="BioGRID-ORCS" id="6519">
    <property type="hits" value="8 hits in 1149 CRISPR screens"/>
</dbReference>
<dbReference type="ChiTaRS" id="SLC3A1">
    <property type="organism name" value="human"/>
</dbReference>
<dbReference type="GeneWiki" id="SLC3A1"/>
<dbReference type="GenomeRNAi" id="6519"/>
<dbReference type="Pharos" id="Q07837">
    <property type="development level" value="Tbio"/>
</dbReference>
<dbReference type="PRO" id="PR:Q07837"/>
<dbReference type="Proteomes" id="UP000005640">
    <property type="component" value="Chromosome 2"/>
</dbReference>
<dbReference type="RNAct" id="Q07837">
    <property type="molecule type" value="protein"/>
</dbReference>
<dbReference type="Bgee" id="ENSG00000138079">
    <property type="expression patterns" value="Expressed in body of pancreas and 103 other cell types or tissues"/>
</dbReference>
<dbReference type="ExpressionAtlas" id="Q07837">
    <property type="expression patterns" value="baseline and differential"/>
</dbReference>
<dbReference type="GO" id="GO:0016324">
    <property type="term" value="C:apical plasma membrane"/>
    <property type="evidence" value="ECO:0007669"/>
    <property type="project" value="UniProtKB-SubCell"/>
</dbReference>
<dbReference type="GO" id="GO:0031526">
    <property type="term" value="C:brush border membrane"/>
    <property type="evidence" value="ECO:0000314"/>
    <property type="project" value="UniProtKB"/>
</dbReference>
<dbReference type="GO" id="GO:0070062">
    <property type="term" value="C:extracellular exosome"/>
    <property type="evidence" value="ECO:0007005"/>
    <property type="project" value="UniProtKB"/>
</dbReference>
<dbReference type="GO" id="GO:0016020">
    <property type="term" value="C:membrane"/>
    <property type="evidence" value="ECO:0000304"/>
    <property type="project" value="ProtInc"/>
</dbReference>
<dbReference type="GO" id="GO:0005886">
    <property type="term" value="C:plasma membrane"/>
    <property type="evidence" value="ECO:0000304"/>
    <property type="project" value="Reactome"/>
</dbReference>
<dbReference type="GO" id="GO:0005774">
    <property type="term" value="C:vacuolar membrane"/>
    <property type="evidence" value="ECO:0007669"/>
    <property type="project" value="Ensembl"/>
</dbReference>
<dbReference type="GO" id="GO:0015171">
    <property type="term" value="F:amino acid transmembrane transporter activity"/>
    <property type="evidence" value="ECO:0000304"/>
    <property type="project" value="ProtInc"/>
</dbReference>
<dbReference type="GO" id="GO:0015174">
    <property type="term" value="F:basic amino acid transmembrane transporter activity"/>
    <property type="evidence" value="ECO:0000304"/>
    <property type="project" value="ProtInc"/>
</dbReference>
<dbReference type="GO" id="GO:0015184">
    <property type="term" value="F:L-cystine transmembrane transporter activity"/>
    <property type="evidence" value="ECO:0000304"/>
    <property type="project" value="ProtInc"/>
</dbReference>
<dbReference type="GO" id="GO:0046982">
    <property type="term" value="F:protein heterodimerization activity"/>
    <property type="evidence" value="ECO:0000314"/>
    <property type="project" value="UniProtKB"/>
</dbReference>
<dbReference type="GO" id="GO:0044877">
    <property type="term" value="F:protein-containing complex binding"/>
    <property type="evidence" value="ECO:0007669"/>
    <property type="project" value="Ensembl"/>
</dbReference>
<dbReference type="GO" id="GO:0006865">
    <property type="term" value="P:amino acid transport"/>
    <property type="evidence" value="ECO:0000318"/>
    <property type="project" value="GO_Central"/>
</dbReference>
<dbReference type="GO" id="GO:0015810">
    <property type="term" value="P:aspartate transmembrane transport"/>
    <property type="evidence" value="ECO:0007669"/>
    <property type="project" value="Ensembl"/>
</dbReference>
<dbReference type="GO" id="GO:0015802">
    <property type="term" value="P:basic amino acid transport"/>
    <property type="evidence" value="ECO:0000304"/>
    <property type="project" value="ProtInc"/>
</dbReference>
<dbReference type="GO" id="GO:0005975">
    <property type="term" value="P:carbohydrate metabolic process"/>
    <property type="evidence" value="ECO:0007669"/>
    <property type="project" value="InterPro"/>
</dbReference>
<dbReference type="GO" id="GO:0010467">
    <property type="term" value="P:gene expression"/>
    <property type="evidence" value="ECO:0007669"/>
    <property type="project" value="Ensembl"/>
</dbReference>
<dbReference type="GO" id="GO:0015811">
    <property type="term" value="P:L-cystine transport"/>
    <property type="evidence" value="ECO:0000304"/>
    <property type="project" value="ProtInc"/>
</dbReference>
<dbReference type="GO" id="GO:0015813">
    <property type="term" value="P:L-glutamate transmembrane transport"/>
    <property type="evidence" value="ECO:0007669"/>
    <property type="project" value="Ensembl"/>
</dbReference>
<dbReference type="CDD" id="cd11359">
    <property type="entry name" value="AmyAc_SLC3A1"/>
    <property type="match status" value="1"/>
</dbReference>
<dbReference type="FunFam" id="3.90.400.10:FF:000001">
    <property type="entry name" value="Maltase A3, isoform A"/>
    <property type="match status" value="1"/>
</dbReference>
<dbReference type="FunFam" id="2.60.40.1180:FF:000026">
    <property type="entry name" value="Solute carrier family 3 (amino acid transporter heavy chain), member 1"/>
    <property type="match status" value="1"/>
</dbReference>
<dbReference type="Gene3D" id="3.20.20.80">
    <property type="entry name" value="Glycosidases"/>
    <property type="match status" value="1"/>
</dbReference>
<dbReference type="Gene3D" id="2.60.40.1180">
    <property type="entry name" value="Golgi alpha-mannosidase II"/>
    <property type="match status" value="1"/>
</dbReference>
<dbReference type="Gene3D" id="3.90.400.10">
    <property type="entry name" value="Oligo-1,6-glucosidase, Domain 2"/>
    <property type="match status" value="1"/>
</dbReference>
<dbReference type="InterPro" id="IPR006047">
    <property type="entry name" value="Glyco_hydro_13_cat_dom"/>
</dbReference>
<dbReference type="InterPro" id="IPR013780">
    <property type="entry name" value="Glyco_hydro_b"/>
</dbReference>
<dbReference type="InterPro" id="IPR017853">
    <property type="entry name" value="Glycoside_hydrolase_SF"/>
</dbReference>
<dbReference type="InterPro" id="IPR045857">
    <property type="entry name" value="O16G_dom_2"/>
</dbReference>
<dbReference type="PANTHER" id="PTHR10357">
    <property type="entry name" value="ALPHA-AMYLASE FAMILY MEMBER"/>
    <property type="match status" value="1"/>
</dbReference>
<dbReference type="PANTHER" id="PTHR10357:SF179">
    <property type="entry name" value="NEUTRAL AND BASIC AMINO ACID TRANSPORT PROTEIN RBAT"/>
    <property type="match status" value="1"/>
</dbReference>
<dbReference type="Pfam" id="PF00128">
    <property type="entry name" value="Alpha-amylase"/>
    <property type="match status" value="1"/>
</dbReference>
<dbReference type="SMART" id="SM00642">
    <property type="entry name" value="Aamy"/>
    <property type="match status" value="1"/>
</dbReference>
<dbReference type="SUPFAM" id="SSF51445">
    <property type="entry name" value="(Trans)glycosidases"/>
    <property type="match status" value="1"/>
</dbReference>
<feature type="chain" id="PRO_0000071950" description="Amino acid transporter heavy chain SLC3A1">
    <location>
        <begin position="1"/>
        <end position="685"/>
    </location>
</feature>
<feature type="topological domain" description="Cytoplasmic" evidence="3">
    <location>
        <begin position="1"/>
        <end position="87"/>
    </location>
</feature>
<feature type="transmembrane region" description="Helical; Signal-anchor for type II membrane protein" evidence="3">
    <location>
        <begin position="88"/>
        <end position="108"/>
    </location>
</feature>
<feature type="topological domain" description="Extracellular" evidence="3">
    <location>
        <begin position="109"/>
        <end position="685"/>
    </location>
</feature>
<feature type="region of interest" description="Disordered" evidence="4">
    <location>
        <begin position="1"/>
        <end position="56"/>
    </location>
</feature>
<feature type="compositionally biased region" description="Basic and acidic residues" evidence="4">
    <location>
        <begin position="1"/>
        <end position="11"/>
    </location>
</feature>
<feature type="binding site" evidence="20 21 36 37 38 39">
    <location>
        <position position="214"/>
    </location>
    <ligand>
        <name>Ca(2+)</name>
        <dbReference type="ChEBI" id="CHEBI:29108"/>
    </ligand>
</feature>
<feature type="binding site" evidence="20 21 36 38 39">
    <location>
        <position position="284"/>
    </location>
    <ligand>
        <name>Ca(2+)</name>
        <dbReference type="ChEBI" id="CHEBI:29108"/>
    </ligand>
</feature>
<feature type="binding site" evidence="20 21 36 37 38 39">
    <location>
        <position position="318"/>
    </location>
    <ligand>
        <name>Ca(2+)</name>
        <dbReference type="ChEBI" id="CHEBI:29108"/>
    </ligand>
</feature>
<feature type="binding site" evidence="20 21 36 37 38 39">
    <location>
        <position position="319"/>
    </location>
    <ligand>
        <name>Ca(2+)</name>
        <dbReference type="ChEBI" id="CHEBI:29108"/>
    </ligand>
</feature>
<feature type="binding site" evidence="20 21 36 37 38 39">
    <location>
        <position position="321"/>
    </location>
    <ligand>
        <name>Ca(2+)</name>
        <dbReference type="ChEBI" id="CHEBI:29108"/>
    </ligand>
</feature>
<feature type="modified residue" description="Phosphoserine" evidence="1">
    <location>
        <position position="10"/>
    </location>
</feature>
<feature type="glycosylation site" description="N-linked (GlcNAc...) asparagine" evidence="3">
    <location>
        <position position="214"/>
    </location>
</feature>
<feature type="glycosylation site" description="N-linked (GlcNAc...) asparagine" evidence="3">
    <location>
        <position position="261"/>
    </location>
</feature>
<feature type="glycosylation site" description="N-linked (GlcNAc...) asparagine" evidence="3">
    <location>
        <position position="332"/>
    </location>
</feature>
<feature type="glycosylation site" description="N-linked (GlcNAc...) asparagine" evidence="3">
    <location>
        <position position="495"/>
    </location>
</feature>
<feature type="glycosylation site" description="N-linked (GlcNAc...) asparagine" evidence="3">
    <location>
        <position position="513"/>
    </location>
</feature>
<feature type="glycosylation site" description="N-linked (GlcNAc...) asparagine" evidence="3">
    <location>
        <position position="575"/>
    </location>
</feature>
<feature type="disulfide bond" description="Interchain (with C-144 in SLC7A5)" evidence="20 36 37">
    <location>
        <position position="114"/>
    </location>
</feature>
<feature type="disulfide bond" evidence="20 21 36 37 38 39">
    <location>
        <begin position="242"/>
        <end position="273"/>
    </location>
</feature>
<feature type="disulfide bond" evidence="20 21 36 37 38 39">
    <location>
        <begin position="571"/>
        <end position="666"/>
    </location>
</feature>
<feature type="disulfide bond" evidence="21 38 39">
    <location>
        <begin position="673"/>
        <end position="685"/>
    </location>
</feature>
<feature type="splice variant" id="VSP_054339" description="In isoform B." evidence="31">
    <location>
        <begin position="1"/>
        <end position="278"/>
    </location>
</feature>
<feature type="splice variant" id="VSP_054340" description="In isoform D." evidence="31">
    <original>MAEDKSKR</original>
    <variation>MTLNLVNS</variation>
    <location>
        <begin position="1"/>
        <end position="8"/>
    </location>
</feature>
<feature type="splice variant" id="VSP_054341" description="In isoform D." evidence="31">
    <location>
        <begin position="9"/>
        <end position="377"/>
    </location>
</feature>
<feature type="splice variant" id="VSP_054342" description="In isoform C." evidence="31">
    <original>FMGTEAYAESID</original>
    <variation>LTTAYALISSQA</variation>
    <location>
        <begin position="380"/>
        <end position="391"/>
    </location>
</feature>
<feature type="splice variant" id="VSP_054343" description="In isoform C." evidence="31">
    <location>
        <begin position="392"/>
        <end position="685"/>
    </location>
</feature>
<feature type="splice variant" id="VSP_054344" description="In isoform E." evidence="31">
    <original>NT</original>
    <variation>VS</variation>
    <location>
        <begin position="501"/>
        <end position="502"/>
    </location>
</feature>
<feature type="splice variant" id="VSP_054345" description="In isoform E." evidence="31">
    <location>
        <begin position="503"/>
        <end position="685"/>
    </location>
</feature>
<feature type="splice variant" id="VSP_054346" description="In isoform F." evidence="31">
    <original>QKTQPRSALKLYQDLSLLHANELL</original>
    <variation>SISENFMLILETKKWVSTESTHSP</variation>
    <location>
        <begin position="541"/>
        <end position="564"/>
    </location>
</feature>
<feature type="splice variant" id="VSP_054347" description="In isoform G." evidence="31">
    <original>QKTQPRSALKL</original>
    <variation>LLRHPCSSAVA</variation>
    <location>
        <begin position="541"/>
        <end position="551"/>
    </location>
</feature>
<feature type="splice variant" id="VSP_054348" description="In isoform G." evidence="31">
    <location>
        <begin position="552"/>
        <end position="685"/>
    </location>
</feature>
<feature type="splice variant" id="VSP_054349" description="In isoform F." evidence="31">
    <location>
        <begin position="565"/>
        <end position="685"/>
    </location>
</feature>
<feature type="sequence variant" id="VAR_072283" description="In CSNU; dbSNP:rs1453871309." evidence="12">
    <original>L</original>
    <variation>P</variation>
    <location>
        <position position="89"/>
    </location>
</feature>
<feature type="sequence variant" id="VAR_064040" description="In CSNU." evidence="6">
    <original>P</original>
    <variation>S</variation>
    <location>
        <position position="122"/>
    </location>
</feature>
<feature type="sequence variant" id="VAR_072284" description="In CSNU; dbSNP:rs1269139353." evidence="12">
    <original>M</original>
    <variation>R</variation>
    <location>
        <position position="123"/>
    </location>
</feature>
<feature type="sequence variant" id="VAR_072285" description="In CSNU; dbSNP:rs766947722." evidence="12">
    <original>Y</original>
    <variation>C</variation>
    <location>
        <position position="124"/>
    </location>
</feature>
<feature type="sequence variant" id="VAR_011420" description="In CSNU; dbSNP:rs576810133." evidence="22">
    <original>P</original>
    <variation>Q</variation>
    <location>
        <position position="128"/>
    </location>
</feature>
<feature type="sequence variant" id="VAR_072286" description="In CSNU." evidence="12">
    <original>S</original>
    <variation>P</variation>
    <location>
        <position position="130"/>
    </location>
</feature>
<feature type="sequence variant" id="VAR_072287" description="In CSNU; dbSNP:rs2104326294." evidence="12 18">
    <original>D</original>
    <variation>G</variation>
    <location>
        <position position="137"/>
    </location>
</feature>
<feature type="sequence variant" id="VAR_072288" description="In CSNU; dbSNP:rs768848958." evidence="14">
    <original>G</original>
    <variation>R</variation>
    <location>
        <position position="140"/>
    </location>
</feature>
<feature type="sequence variant" id="VAR_072289" description="In CSNU." evidence="12">
    <original>L</original>
    <variation>Q</variation>
    <location>
        <position position="149"/>
    </location>
</feature>
<feature type="sequence variant" id="VAR_038200" description="In CSNU; dbSNP:rs778354350." evidence="8">
    <original>Y</original>
    <variation>C</variation>
    <location>
        <position position="151"/>
    </location>
</feature>
<feature type="sequence variant" id="VAR_072290" description="In CSNU; dbSNP:rs747660493." evidence="14">
    <original>D</original>
    <variation>Y</variation>
    <location>
        <position position="179"/>
    </location>
</feature>
<feature type="sequence variant" id="VAR_011421" description="In CSNU; dbSNP:rs121912694." evidence="26">
    <original>R</original>
    <variation>Q</variation>
    <location>
        <position position="181"/>
    </location>
</feature>
<feature type="sequence variant" id="VAR_072291" description="In CSNU; uncertain significance; impairs protein stability and dimer formation; dbSNP:rs1233216697." evidence="16 20">
    <original>V</original>
    <variation>A</variation>
    <location>
        <position position="183"/>
    </location>
</feature>
<feature type="sequence variant" id="VAR_072292" description="In CSNU; dbSNP:rs140317484." evidence="12">
    <original>T</original>
    <variation>M</variation>
    <location>
        <position position="189"/>
    </location>
</feature>
<feature type="sequence variant" id="VAR_022600" description="In CSNU; impairs protein stability and dimer formation; dbSNP:rs369641941." evidence="10 14 20">
    <original>T</original>
    <variation>M</variation>
    <location>
        <position position="216"/>
    </location>
</feature>
<feature type="sequence variant" id="VAR_038201" description="In CSNU." evidence="8">
    <original>N</original>
    <variation>K</variation>
    <location>
        <position position="253"/>
    </location>
</feature>
<feature type="sequence variant" id="VAR_011422" description="In CSNU; reduction in amino acid transport activity; dbSNP:rs757239030." evidence="24">
    <original>E</original>
    <variation>K</variation>
    <location>
        <position position="268"/>
    </location>
</feature>
<feature type="sequence variant" id="VAR_011423" description="In CSNU; reduction in amino acid transport activity; dbSNP:rs200287661." evidence="24">
    <original>T</original>
    <variation>A</variation>
    <location>
        <position position="341"/>
    </location>
</feature>
<feature type="sequence variant" id="VAR_072293" description="In CSNU; uncertain significance." evidence="16">
    <original>L</original>
    <variation>P</variation>
    <location>
        <position position="346"/>
    </location>
</feature>
<feature type="sequence variant" id="VAR_072294" description="In CSNU; dbSNP:rs756887216." evidence="12">
    <original>H</original>
    <variation>P</variation>
    <location>
        <position position="348"/>
    </location>
</feature>
<feature type="sequence variant" id="VAR_022601" description="In CSNU; dbSNP:rs375399468." evidence="10">
    <original>R</original>
    <variation>C</variation>
    <location>
        <position position="362"/>
    </location>
</feature>
<feature type="sequence variant" id="VAR_038202" description="In CSNU; dbSNP:rs121912697." evidence="8">
    <original>R</original>
    <variation>H</variation>
    <location>
        <position position="362"/>
    </location>
</feature>
<feature type="sequence variant" id="VAR_072295" description="In CSNU; dbSNP:rs567478582." evidence="14">
    <original>R</original>
    <variation>P</variation>
    <location>
        <position position="365"/>
    </location>
</feature>
<feature type="sequence variant" id="VAR_011424" description="In CSNU; dbSNP:rs765828196." evidence="10 18 23">
    <original>R</original>
    <variation>W</variation>
    <location>
        <position position="365"/>
    </location>
</feature>
<feature type="sequence variant" id="VAR_038203" description="In CSNU; dbSNP:rs1297802490." evidence="8">
    <original>G</original>
    <variation>R</variation>
    <location>
        <position position="398"/>
    </location>
</feature>
<feature type="sequence variant" id="VAR_072296" description="In CSNU; dbSNP:rs1672093819." evidence="12">
    <original>N</original>
    <variation>K</variation>
    <location>
        <position position="410"/>
    </location>
</feature>
<feature type="sequence variant" id="VAR_072297" description="In CSNU; dbSNP:rs779168140." evidence="12">
    <original>P</original>
    <variation>R</variation>
    <location>
        <position position="441"/>
    </location>
</feature>
<feature type="sequence variant" id="VAR_072298" description="In CSNU; uncertain significance; dbSNP:rs187962930." evidence="16">
    <original>I</original>
    <variation>T</variation>
    <location>
        <position position="445"/>
    </location>
</feature>
<feature type="sequence variant" id="VAR_072299" description="In CSNU; dbSNP:rs750912461." evidence="18">
    <original>R</original>
    <variation>Q</variation>
    <location>
        <position position="452"/>
    </location>
</feature>
<feature type="sequence variant" id="VAR_011425" description="In CSNU; dbSNP:rs201502095." evidence="14 30">
    <original>R</original>
    <variation>W</variation>
    <location>
        <position position="452"/>
    </location>
</feature>
<feature type="sequence variant" id="VAR_072300" description="In CSNU; dbSNP:rs949704245." evidence="12">
    <original>S</original>
    <variation>L</variation>
    <location>
        <position position="455"/>
    </location>
</feature>
<feature type="sequence variant" id="VAR_072301" description="In CSNU; dbSNP:rs139251285." evidence="12">
    <original>R</original>
    <variation>C</variation>
    <location>
        <position position="456"/>
    </location>
</feature>
<feature type="sequence variant" id="VAR_072302" description="In CSNU; dbSNP:rs373852467." evidence="12">
    <original>R</original>
    <variation>H</variation>
    <location>
        <position position="456"/>
    </location>
</feature>
<feature type="sequence variant" id="VAR_011426" description="In CSNU; dbSNP:rs144162964." evidence="8 30">
    <original>Y</original>
    <variation>H</variation>
    <location>
        <position position="461"/>
    </location>
</feature>
<feature type="sequence variant" id="VAR_011428" description="In CSNU; dbSNP:rs121912691." evidence="26">
    <original>M</original>
    <variation>K</variation>
    <location>
        <position position="467"/>
    </location>
</feature>
<feature type="sequence variant" id="VAR_011427" description="In CSNU; impairs protein stability and dimer formation; loss of 80% of amino acid transport activity; dbSNP:rs121912691." evidence="8 10 14 18 20 26 30">
    <original>M</original>
    <variation>T</variation>
    <location>
        <position position="467"/>
    </location>
</feature>
<feature type="sequence variant" id="VAR_038204" description="In CSNU." evidence="8">
    <original>G</original>
    <variation>V</variation>
    <location>
        <position position="481"/>
    </location>
</feature>
<feature type="sequence variant" id="VAR_038205" description="In CSNU." evidence="8">
    <original>E</original>
    <variation>K</variation>
    <location>
        <position position="482"/>
    </location>
</feature>
<feature type="sequence variant" id="VAR_072303" description="In CSNU." evidence="12">
    <original>S</original>
    <variation>L</variation>
    <location>
        <position position="507"/>
    </location>
</feature>
<feature type="sequence variant" id="VAR_022602" description="In CSNU; dbSNP:rs1032513393." evidence="10">
    <original>P</original>
    <variation>A</variation>
    <location>
        <position position="508"/>
    </location>
</feature>
<feature type="sequence variant" id="VAR_038206" description="In CSNU; dbSNP:rs778925791." evidence="8">
    <original>Q</original>
    <variation>R</variation>
    <location>
        <position position="510"/>
    </location>
</feature>
<feature type="sequence variant" id="VAR_072304" description="In CSNU; dbSNP:rs368796166." evidence="14 18">
    <original>S</original>
    <variation>W</variation>
    <location>
        <position position="547"/>
    </location>
</feature>
<feature type="sequence variant" id="VAR_072305" description="In CSNU; dbSNP:rs376639206." evidence="12">
    <original>G</original>
    <variation>S</variation>
    <location>
        <position position="568"/>
    </location>
</feature>
<feature type="sequence variant" id="VAR_011429" description="In CSNU; dbSNP:rs776729515." evidence="23">
    <original>Y</original>
    <variation>H</variation>
    <location>
        <position position="582"/>
    </location>
</feature>
<feature type="sequence variant" id="VAR_038207" description="In CSNU; dbSNP:rs759696513." evidence="8">
    <original>R</original>
    <variation>T</variation>
    <location>
        <position position="584"/>
    </location>
</feature>
<feature type="sequence variant" id="VAR_038208" description="In CSNU; dbSNP:rs146963107." evidence="8">
    <original>F</original>
    <variation>S</variation>
    <location>
        <position position="599"/>
    </location>
</feature>
<feature type="sequence variant" id="VAR_038209" description="In CSNU; dbSNP:rs141944551." evidence="8">
    <original>G</original>
    <variation>E</variation>
    <location>
        <position position="600"/>
    </location>
</feature>
<feature type="sequence variant" id="VAR_011430" description="In CSNU; dbSNP:rs121912696." evidence="26">
    <original>P</original>
    <variation>T</variation>
    <location>
        <position position="615"/>
    </location>
</feature>
<feature type="sequence variant" id="VAR_011431" description="In dbSNP:rs698761." evidence="7 8 11 13 23 27 28 30">
    <original>M</original>
    <variation>I</variation>
    <location>
        <position position="618"/>
    </location>
</feature>
<feature type="sequence variant" id="VAR_011432" description="In CSNU; dbSNP:rs1279289214." evidence="23">
    <original>F</original>
    <variation>S</variation>
    <location>
        <position position="648"/>
    </location>
</feature>
<feature type="sequence variant" id="VAR_011433" description="In CSNU; dbSNP:rs121912695." evidence="26">
    <original>T</original>
    <variation>R</variation>
    <location>
        <position position="652"/>
    </location>
</feature>
<feature type="sequence variant" id="VAR_072306" description="In CSNU." evidence="12">
    <original>C</original>
    <variation>W</variation>
    <location>
        <position position="666"/>
    </location>
</feature>
<feature type="sequence variant" id="VAR_072307" description="In CSNU; uncertain significance; dbSNP:rs756823144." evidence="16">
    <original>C</original>
    <variation>R</variation>
    <location>
        <position position="673"/>
    </location>
</feature>
<feature type="sequence variant" id="VAR_011434" description="In CSNU; dbSNP:rs121912693." evidence="26">
    <original>L</original>
    <variation>P</variation>
    <location>
        <position position="678"/>
    </location>
</feature>
<feature type="helix" evidence="40">
    <location>
        <begin position="70"/>
        <end position="73"/>
    </location>
</feature>
<feature type="turn" evidence="40">
    <location>
        <begin position="74"/>
        <end position="78"/>
    </location>
</feature>
<feature type="helix" evidence="40">
    <location>
        <begin position="80"/>
        <end position="110"/>
    </location>
</feature>
<feature type="helix" evidence="40">
    <location>
        <begin position="117"/>
        <end position="120"/>
    </location>
</feature>
<feature type="strand" evidence="40">
    <location>
        <begin position="123"/>
        <end position="126"/>
    </location>
</feature>
<feature type="helix" evidence="40">
    <location>
        <begin position="128"/>
        <end position="130"/>
    </location>
</feature>
<feature type="strand" evidence="40">
    <location>
        <begin position="134"/>
        <end position="139"/>
    </location>
</feature>
<feature type="helix" evidence="40">
    <location>
        <begin position="142"/>
        <end position="146"/>
    </location>
</feature>
<feature type="helix" evidence="40">
    <location>
        <begin position="149"/>
        <end position="154"/>
    </location>
</feature>
<feature type="strand" evidence="40">
    <location>
        <begin position="159"/>
        <end position="162"/>
    </location>
</feature>
<feature type="strand" evidence="40">
    <location>
        <begin position="166"/>
        <end position="169"/>
    </location>
</feature>
<feature type="turn" evidence="40">
    <location>
        <begin position="173"/>
        <end position="175"/>
    </location>
</feature>
<feature type="strand" evidence="40">
    <location>
        <begin position="177"/>
        <end position="183"/>
    </location>
</feature>
<feature type="turn" evidence="40">
    <location>
        <begin position="185"/>
        <end position="187"/>
    </location>
</feature>
<feature type="helix" evidence="40">
    <location>
        <begin position="190"/>
        <end position="202"/>
    </location>
</feature>
<feature type="strand" evidence="40">
    <location>
        <begin position="206"/>
        <end position="211"/>
    </location>
</feature>
<feature type="helix" evidence="40">
    <location>
        <begin position="221"/>
        <end position="226"/>
    </location>
</feature>
<feature type="turn" evidence="40">
    <location>
        <begin position="227"/>
        <end position="229"/>
    </location>
</feature>
<feature type="helix" evidence="40">
    <location>
        <begin position="231"/>
        <end position="235"/>
    </location>
</feature>
<feature type="strand" evidence="40">
    <location>
        <begin position="258"/>
        <end position="267"/>
    </location>
</feature>
<feature type="turn" evidence="40">
    <location>
        <begin position="268"/>
        <end position="271"/>
    </location>
</feature>
<feature type="strand" evidence="40">
    <location>
        <begin position="272"/>
        <end position="275"/>
    </location>
</feature>
<feature type="helix" evidence="40">
    <location>
        <begin position="290"/>
        <end position="305"/>
    </location>
</feature>
<feature type="strand" evidence="40">
    <location>
        <begin position="310"/>
        <end position="313"/>
    </location>
</feature>
<feature type="helix" evidence="40">
    <location>
        <begin position="316"/>
        <end position="318"/>
    </location>
</feature>
<feature type="strand" evidence="40">
    <location>
        <begin position="329"/>
        <end position="332"/>
    </location>
</feature>
<feature type="helix" evidence="40">
    <location>
        <begin position="343"/>
        <end position="345"/>
    </location>
</feature>
<feature type="turn" evidence="40">
    <location>
        <begin position="349"/>
        <end position="351"/>
    </location>
</feature>
<feature type="helix" evidence="40">
    <location>
        <begin position="357"/>
        <end position="369"/>
    </location>
</feature>
<feature type="strand" evidence="42">
    <location>
        <begin position="374"/>
        <end position="376"/>
    </location>
</feature>
<feature type="strand" evidence="40">
    <location>
        <begin position="380"/>
        <end position="383"/>
    </location>
</feature>
<feature type="helix" evidence="40">
    <location>
        <begin position="390"/>
        <end position="393"/>
    </location>
</feature>
<feature type="helix" evidence="40">
    <location>
        <begin position="394"/>
        <end position="397"/>
    </location>
</feature>
<feature type="strand" evidence="41">
    <location>
        <begin position="400"/>
        <end position="402"/>
    </location>
</feature>
<feature type="strand" evidence="40">
    <location>
        <begin position="406"/>
        <end position="408"/>
    </location>
</feature>
<feature type="turn" evidence="40">
    <location>
        <begin position="412"/>
        <end position="415"/>
    </location>
</feature>
<feature type="helix" evidence="40">
    <location>
        <begin position="421"/>
        <end position="434"/>
    </location>
</feature>
<feature type="strand" evidence="40">
    <location>
        <begin position="442"/>
        <end position="445"/>
    </location>
</feature>
<feature type="helix" evidence="40">
    <location>
        <begin position="453"/>
        <end position="456"/>
    </location>
</feature>
<feature type="helix" evidence="40">
    <location>
        <begin position="459"/>
        <end position="461"/>
    </location>
</feature>
<feature type="helix" evidence="40">
    <location>
        <begin position="462"/>
        <end position="471"/>
    </location>
</feature>
<feature type="strand" evidence="40">
    <location>
        <begin position="472"/>
        <end position="479"/>
    </location>
</feature>
<feature type="turn" evidence="40">
    <location>
        <begin position="480"/>
        <end position="485"/>
    </location>
</feature>
<feature type="turn" evidence="40">
    <location>
        <begin position="500"/>
        <end position="502"/>
    </location>
</feature>
<feature type="helix" evidence="40">
    <location>
        <begin position="503"/>
        <end position="505"/>
    </location>
</feature>
<feature type="strand" evidence="40">
    <location>
        <begin position="512"/>
        <end position="514"/>
    </location>
</feature>
<feature type="helix" evidence="40">
    <location>
        <begin position="515"/>
        <end position="518"/>
    </location>
</feature>
<feature type="strand" evidence="40">
    <location>
        <begin position="521"/>
        <end position="524"/>
    </location>
</feature>
<feature type="helix" evidence="40">
    <location>
        <begin position="531"/>
        <end position="534"/>
    </location>
</feature>
<feature type="helix" evidence="40">
    <location>
        <begin position="538"/>
        <end position="541"/>
    </location>
</feature>
<feature type="strand" evidence="42">
    <location>
        <begin position="544"/>
        <end position="546"/>
    </location>
</feature>
<feature type="helix" evidence="40">
    <location>
        <begin position="548"/>
        <end position="561"/>
    </location>
</feature>
<feature type="helix" evidence="40">
    <location>
        <begin position="563"/>
        <end position="566"/>
    </location>
</feature>
<feature type="strand" evidence="40">
    <location>
        <begin position="568"/>
        <end position="572"/>
    </location>
</feature>
<feature type="strand" evidence="40">
    <location>
        <begin position="577"/>
        <end position="585"/>
    </location>
</feature>
<feature type="strand" evidence="40">
    <location>
        <begin position="591"/>
        <end position="598"/>
    </location>
</feature>
<feature type="strand" evidence="40">
    <location>
        <begin position="600"/>
        <end position="605"/>
    </location>
</feature>
<feature type="helix" evidence="40">
    <location>
        <begin position="607"/>
        <end position="609"/>
    </location>
</feature>
<feature type="strand" evidence="40">
    <location>
        <begin position="611"/>
        <end position="613"/>
    </location>
</feature>
<feature type="strand" evidence="40">
    <location>
        <begin position="616"/>
        <end position="625"/>
    </location>
</feature>
<feature type="helix" evidence="40">
    <location>
        <begin position="626"/>
        <end position="628"/>
    </location>
</feature>
<feature type="strand" evidence="40">
    <location>
        <begin position="632"/>
        <end position="636"/>
    </location>
</feature>
<feature type="strand" evidence="40">
    <location>
        <begin position="638"/>
        <end position="640"/>
    </location>
</feature>
<feature type="strand" evidence="40">
    <location>
        <begin position="645"/>
        <end position="651"/>
    </location>
</feature>
<feature type="turn" evidence="40">
    <location>
        <begin position="656"/>
        <end position="658"/>
    </location>
</feature>
<feature type="turn" evidence="40">
    <location>
        <begin position="660"/>
        <end position="662"/>
    </location>
</feature>
<feature type="helix" evidence="40">
    <location>
        <begin position="663"/>
        <end position="665"/>
    </location>
</feature>
<feature type="strand" evidence="40">
    <location>
        <begin position="673"/>
        <end position="675"/>
    </location>
</feature>
<feature type="turn" evidence="40">
    <location>
        <begin position="676"/>
        <end position="679"/>
    </location>
</feature>
<feature type="strand" evidence="40">
    <location>
        <begin position="680"/>
        <end position="682"/>
    </location>
</feature>
<sequence length="685" mass="78852">MAEDKSKRDSIEMSMKGCQTNNGFVHNEDILEQTPDPGSSTDNLKHSTRGILGSQEPDFKGVQPYAGMPKEVLFQFSGQARYRIPREILFWLTVASVLVLIAATIAIIALSPKCLDWWQEGPMYQIYPRSFKDSNKDGNGDLKGIQDKLDYITALNIKTVWITSFYKSSLKDFRYGVEDFREVDPIFGTMEDFENLVAAIHDKGLKLIIDFIPNHTSDKHIWFQLSRTRTGKYTDYYIWHDCTHENGKTIPPNNWLSVYGNSSWHFDEVRNQCYFHQFMKEQPDLNFRNPDVQEEIKEILRFWLTKGVDGFSLDAVKFLLEAKHLRDEIQVNKTQIPDTVTQYSELYHDFTTTQVGMHDIVRSFRQTMDQYSTEPGRYRFMGTEAYAESIDRTVMYYGLPFIQEADFPFNNYLSMLDTVSGNSVYEVITSWMENMPEGKWPNWMIGGPDSSRLTSRLGNQYVNVMNMLLFTLPGTPITYYGEEIGMGNIVAANLNESYDINTLRSKSPMQWDNSSNAGFSEASNTWLPTNSDYHTVNVDVQKTQPRSALKLYQDLSLLHANELLLNRGWFCHLRNDSHYVVYTRELDGIDRIFIVVLNFGESTLLNLHNMISGLPAKMRIRLSTNSADKGSKVDTSGIFLDKGEGLIFEHNTKNLLHRQTAFRDRCFVSNRACYSSVLNILYTSC</sequence>
<organism>
    <name type="scientific">Homo sapiens</name>
    <name type="common">Human</name>
    <dbReference type="NCBI Taxonomy" id="9606"/>
    <lineage>
        <taxon>Eukaryota</taxon>
        <taxon>Metazoa</taxon>
        <taxon>Chordata</taxon>
        <taxon>Craniata</taxon>
        <taxon>Vertebrata</taxon>
        <taxon>Euteleostomi</taxon>
        <taxon>Mammalia</taxon>
        <taxon>Eutheria</taxon>
        <taxon>Euarchontoglires</taxon>
        <taxon>Primates</taxon>
        <taxon>Haplorrhini</taxon>
        <taxon>Catarrhini</taxon>
        <taxon>Hominidae</taxon>
        <taxon>Homo</taxon>
    </lineage>
</organism>
<comment type="function">
    <text evidence="2 5 7 16 17 20 21 25 27 28 29">Acts as a chaperone that facilitates biogenesis and trafficking of functional transporter heteromers to the plasma membrane (By similarity) (PubMed:10588648, PubMed:11318953, PubMed:16609684, PubMed:16825196, PubMed:32494597, PubMed:32817565, PubMed:7686906, PubMed:8486766, PubMed:8663184, PubMed:8663357). Associates with SLC7A9 to form a functional transporter complex that mediates the electrogenic exchange between cationic amino acids and neutral amino acids, with a stoichiometry of 1:1. SLC7A9-SLC3A1 transporter has system b(0,+)-like activity with high affinity for extracellular cationic amino acids and L-cystine and lower affinity for intracellular neutral amino acids. Substrate exchange is driven by high concentration of intracellular neutral amino acids and the intracellular reduction of L-cystine to L-cysteine. SLC7A9-SLC3A1 acts as a major transporter for reabsorption of L-cystine and dibasic amino acids across the brush border membrane in early proximal tubules (PubMed:10588648, PubMed:11318953, PubMed:16609684, PubMed:16825196, PubMed:32494597, PubMed:32817565, PubMed:7686906, PubMed:8486766, PubMed:8663184, PubMed:8663357). Associates with SLC7A13 to form a functional complex that transports anionic and neutral amino acids via exchange or facilitated diffusion. SLC7A13-SLC3A1 may act as a major transporter for L-cystine in late proximal tubules, ensuring its reabsorption from the luminal fluid in exchange for cytosolic L-glutamate or L-aspartate (By similarity).</text>
</comment>
<comment type="subunit">
    <text evidence="2 5 9 17 20 21">Disulfide-linked heterodimer composed of the catalytic light subunit SLC7A9 and the heavy subunit SLC3A1. The heterodimer is the minimal functional unit. Assembles in non-covalently linked heterotetramers (dimers of heterodimers) and higher order oligomers; the oligomerization is mediated by SLC3A1 likely to prevent degradation in the endoplasmic reticulum and facilitate heteromer trafficking to the plasma membrane (PubMed:10588648, PubMed:12167606, PubMed:16825196, PubMed:32494597, PubMed:32817565). Disulfide-linked heterodimer composed of the catalytic light subunit SLC7A13 and the heavy subunit SLC3A1 (By similarity).</text>
</comment>
<comment type="interaction">
    <interactant intactId="EBI-46442178">
        <id>Q07837</id>
    </interactant>
    <interactant intactId="EBI-3936589">
        <id>P82251</id>
        <label>SLC7A9</label>
    </interactant>
    <organismsDiffer>false</organismsDiffer>
    <experiments>2</experiments>
</comment>
<comment type="subcellular location">
    <subcellularLocation>
        <location evidence="9 21">Cell membrane</location>
        <topology evidence="3">Single-pass type II membrane protein</topology>
    </subcellularLocation>
    <subcellularLocation>
        <location evidence="2">Apical cell membrane</location>
        <topology evidence="3">Single-pass type II membrane protein</topology>
    </subcellularLocation>
</comment>
<comment type="alternative products">
    <event type="alternative splicing"/>
    <isoform>
        <id>Q07837-1</id>
        <name>A</name>
        <sequence type="displayed"/>
    </isoform>
    <isoform>
        <id>Q07837-2</id>
        <name>B</name>
        <sequence type="described" ref="VSP_054339"/>
    </isoform>
    <isoform>
        <id>Q07837-3</id>
        <name>C</name>
        <sequence type="described" ref="VSP_054342 VSP_054343"/>
    </isoform>
    <isoform>
        <id>Q07837-4</id>
        <name>D</name>
        <sequence type="described" ref="VSP_054340 VSP_054341"/>
    </isoform>
    <isoform>
        <id>Q07837-5</id>
        <name>E</name>
        <sequence type="described" ref="VSP_054344 VSP_054345"/>
    </isoform>
    <isoform>
        <id>Q07837-6</id>
        <name>F</name>
        <sequence type="described" ref="VSP_054346 VSP_054349"/>
    </isoform>
    <isoform>
        <id>Q07837-7</id>
        <name>G</name>
        <sequence type="described" ref="VSP_054347 VSP_054348"/>
    </isoform>
</comment>
<comment type="tissue specificity">
    <text evidence="9 25 27">Expressed in the brush border membrane in the kidney (at protein level). Predominantly expressed in the kidney, small intestine and pancreas. Weakly expressed in liver.</text>
</comment>
<comment type="disease" evidence="6 8 10 12 14 16 18 20 22 23 24 26 30">
    <disease id="DI-01468">
        <name>Cystinuria</name>
        <acronym>CSNU</acronym>
        <description>An autosomal disorder characterized by impaired epithelial cell transport of cystine and dibasic amino acids (lysine, ornithine, and arginine) in the proximal renal tubule and gastrointestinal tract. The impaired renal reabsorption of cystine and its low solubility causes the formation of calculi in the urinary tract, resulting in obstructive uropathy, pyelonephritis, and, rarely, renal failure.</description>
        <dbReference type="MIM" id="220100"/>
    </disease>
    <text>The disease is caused by variants affecting the gene represented in this entry.</text>
</comment>
<comment type="disease" evidence="15 19">
    <disease id="DI-01801">
        <name>Hypotonia-cystinuria syndrome</name>
        <acronym>HCS</acronym>
        <description>Characterized generalized hypotonia at birth, nephrolithiasis, growth hormone deficiency, minor facial dysmorphism, failure to thrive, followed by hyperphagia and rapid weight gain in late childhood.</description>
        <dbReference type="MIM" id="606407"/>
    </disease>
    <text evidence="15 19">The disease is caused by variants affecting the gene represented in this entry. Hypotonia-cystinuria syndrome is a contiguous gene syndrome caused by a homozygous deletion on chromosome 2p21 that disrupts the gene represented in this entry and PREPL (PubMed:16385448, PubMed:21686663). A homozygous 77.4-kb deletion that disrupts the gene represented in this entry, PREPL, and CAMKMT, causes atypical hypotonia-cystinuria syndrome, characterized by mild to moderate intellectual disability and respiratory chain complex IV deficiency (PubMed:21686663).</text>
</comment>
<name>SLC31_HUMAN</name>
<accession>Q07837</accession>
<accession>A8K0S1</accession>
<accession>O00658</accession>
<accession>Q15295</accession>
<accession>Q4J6B4</accession>
<accession>Q4J6B5</accession>
<accession>Q4J6B6</accession>
<accession>Q4J6B7</accession>
<accession>Q4J6B8</accession>
<accession>Q4J6B9</accession>
<accession>Q52M92</accession>
<accession>Q52M94</accession>